<proteinExistence type="inferred from homology"/>
<gene>
    <name type="primary">ydgT</name>
    <name type="synonym">cnu</name>
    <name type="ordered locus">SCH_1479</name>
</gene>
<organism>
    <name type="scientific">Salmonella choleraesuis (strain SC-B67)</name>
    <dbReference type="NCBI Taxonomy" id="321314"/>
    <lineage>
        <taxon>Bacteria</taxon>
        <taxon>Pseudomonadati</taxon>
        <taxon>Pseudomonadota</taxon>
        <taxon>Gammaproteobacteria</taxon>
        <taxon>Enterobacterales</taxon>
        <taxon>Enterobacteriaceae</taxon>
        <taxon>Salmonella</taxon>
    </lineage>
</organism>
<name>YDGT_SALCH</name>
<accession>Q57PH6</accession>
<dbReference type="EMBL" id="AE017220">
    <property type="protein sequence ID" value="AAX65385.1"/>
    <property type="status" value="ALT_INIT"/>
    <property type="molecule type" value="Genomic_DNA"/>
</dbReference>
<dbReference type="RefSeq" id="WP_000217946.1">
    <property type="nucleotide sequence ID" value="NC_006905.1"/>
</dbReference>
<dbReference type="SMR" id="Q57PH6"/>
<dbReference type="GeneID" id="66755902"/>
<dbReference type="KEGG" id="sec:SCH_1479"/>
<dbReference type="HOGENOM" id="CLU_190629_0_0_6"/>
<dbReference type="Proteomes" id="UP000000538">
    <property type="component" value="Chromosome"/>
</dbReference>
<dbReference type="GO" id="GO:0003677">
    <property type="term" value="F:DNA binding"/>
    <property type="evidence" value="ECO:0007669"/>
    <property type="project" value="UniProtKB-KW"/>
</dbReference>
<dbReference type="Gene3D" id="1.20.1280.40">
    <property type="entry name" value="HHA"/>
    <property type="match status" value="1"/>
</dbReference>
<dbReference type="InterPro" id="IPR007985">
    <property type="entry name" value="Hemolysn_expr_modulating_HHA"/>
</dbReference>
<dbReference type="InterPro" id="IPR036666">
    <property type="entry name" value="HHA_sf"/>
</dbReference>
<dbReference type="NCBIfam" id="NF007703">
    <property type="entry name" value="PRK10391.1"/>
    <property type="match status" value="1"/>
</dbReference>
<dbReference type="Pfam" id="PF05321">
    <property type="entry name" value="HHA"/>
    <property type="match status" value="1"/>
</dbReference>
<dbReference type="SUPFAM" id="SSF68989">
    <property type="entry name" value="Hemolysin expression modulating protein HHA"/>
    <property type="match status" value="1"/>
</dbReference>
<feature type="chain" id="PRO_0000305051" description="Transcription modulator YdgT">
    <location>
        <begin position="1"/>
        <end position="71"/>
    </location>
</feature>
<feature type="site" description="Interacts with H-NS" evidence="1">
    <location>
        <position position="44"/>
    </location>
</feature>
<evidence type="ECO:0000250" key="1"/>
<evidence type="ECO:0000250" key="2">
    <source>
        <dbReference type="UniProtKB" id="A0A0H3NGF1"/>
    </source>
</evidence>
<evidence type="ECO:0000250" key="3">
    <source>
        <dbReference type="UniProtKB" id="P64467"/>
    </source>
</evidence>
<evidence type="ECO:0000250" key="4">
    <source>
        <dbReference type="UniProtKB" id="Q7CQK5"/>
    </source>
</evidence>
<evidence type="ECO:0000305" key="5"/>
<reference key="1">
    <citation type="journal article" date="2005" name="Nucleic Acids Res.">
        <title>The genome sequence of Salmonella enterica serovar Choleraesuis, a highly invasive and resistant zoonotic pathogen.</title>
        <authorList>
            <person name="Chiu C.-H."/>
            <person name="Tang P."/>
            <person name="Chu C."/>
            <person name="Hu S."/>
            <person name="Bao Q."/>
            <person name="Yu J."/>
            <person name="Chou Y.-Y."/>
            <person name="Wang H.-S."/>
            <person name="Lee Y.-S."/>
        </authorList>
    </citation>
    <scope>NUCLEOTIDE SEQUENCE [LARGE SCALE GENOMIC DNA]</scope>
    <source>
        <strain>SC-B67</strain>
    </source>
</reference>
<sequence>MTVQDYLLKFRKISSLESLEKLFDHLNYTLTDDMDIVNMYRAADHRRAELVSGGRLFDVGQVPQSVWRYVQ</sequence>
<keyword id="KW-0238">DNA-binding</keyword>
<keyword id="KW-0804">Transcription</keyword>
<keyword id="KW-0805">Transcription regulation</keyword>
<comment type="function">
    <text evidence="2 3">Binds to H-NS and modified the range of genes it silences; H-NS alonge silences core gene while the H-NS-Hha complex (and presumably also H-NS-YdgT) silences genes acquired by horizontal gene transfer. Plays a role silencing virulence factors in the absence of factors that induce pathogenicity (By similarity). The complex formed with H-NS binds to the specific 26-bp cnb site in the origin of replication oriC (By similarity).</text>
</comment>
<comment type="subunit">
    <text evidence="4">Forms complexes with both H-NS and StpA.</text>
</comment>
<comment type="similarity">
    <text evidence="5">Belongs to the Hha/YmoA/Cnu family.</text>
</comment>
<comment type="sequence caution" evidence="5">
    <conflict type="erroneous initiation">
        <sequence resource="EMBL-CDS" id="AAX65385"/>
    </conflict>
    <text>Extended N-terminus.</text>
</comment>
<protein>
    <recommendedName>
        <fullName>Transcription modulator YdgT</fullName>
    </recommendedName>
    <alternativeName>
        <fullName>H-NS/StpA-binding protein 2</fullName>
    </alternativeName>
    <alternativeName>
        <fullName>OriC-binding nucleoid-associated protein</fullName>
    </alternativeName>
</protein>